<organism>
    <name type="scientific">Acetivibrio thermocellus (strain ATCC 27405 / DSM 1237 / JCM 9322 / NBRC 103400 / NCIMB 10682 / NRRL B-4536 / VPI 7372)</name>
    <name type="common">Clostridium thermocellum</name>
    <dbReference type="NCBI Taxonomy" id="203119"/>
    <lineage>
        <taxon>Bacteria</taxon>
        <taxon>Bacillati</taxon>
        <taxon>Bacillota</taxon>
        <taxon>Clostridia</taxon>
        <taxon>Eubacteriales</taxon>
        <taxon>Oscillospiraceae</taxon>
        <taxon>Acetivibrio</taxon>
    </lineage>
</organism>
<name>CELE_ACET2</name>
<gene>
    <name evidence="9" type="primary">celE</name>
    <name evidence="12" type="ordered locus">Cthe_0797</name>
</gene>
<comment type="function">
    <text evidence="5 6 7">Multifunctional enzyme involved in the degradation of plant cell wall polysaccharides. Displays endoglucanase activity against carboxymethyl cellulose (CMC) and barley beta-glucan (PubMed:1991028, PubMed:3066698). Also catalyzes the deacetylation of acetylated birchwood xylan and glucomannan, with a preference for the latter, and of the synthetic substrate 4-nitrophenyl acetate (4-NPAc) (PubMed:19338387).</text>
</comment>
<comment type="catalytic activity">
    <reaction evidence="6 7">
        <text>Endohydrolysis of (1-&gt;4)-beta-D-glucosidic linkages in cellulose, lichenin and cereal beta-D-glucans.</text>
        <dbReference type="EC" id="3.2.1.4"/>
    </reaction>
</comment>
<comment type="catalytic activity">
    <reaction evidence="5">
        <text>Deacetylation of xylans and xylo-oligosaccharides.</text>
        <dbReference type="EC" id="3.1.1.72"/>
    </reaction>
</comment>
<comment type="activity regulation">
    <text evidence="5">Esterase activity of the CE2 module is inhibited when this domain binds to cellohexaose or beta-glucan.</text>
</comment>
<comment type="biophysicochemical properties">
    <kinetics>
        <KM evidence="5">165 uM for 4-nitrophenyl acetate</KM>
        <KM evidence="5">2.7 mM for acetylated birchwood xylan</KM>
        <KM evidence="5">0.019 mM for acetylated glucomannan</KM>
        <text evidence="5">kcat is 7032 min(-1) for the deacetylation of 4-nitrophenyl acetate. kcat is 12 min(-1) for the deacetylation of birchwood xylan. kcat is 1.1 min(-1) for the deacetylation of glucomannan.</text>
    </kinetics>
</comment>
<comment type="pathway">
    <text evidence="7">Glycan metabolism; cellulose degradation.</text>
</comment>
<comment type="pathway">
    <text evidence="5">Glycan degradation; xylan degradation.</text>
</comment>
<comment type="subcellular location">
    <subcellularLocation>
        <location evidence="10">Secreted</location>
    </subcellularLocation>
</comment>
<comment type="domain">
    <text evidence="5 6">Contains an N-terminal module that displays cellulase activity (CtCel5C), a central type I dockerin module (Doc) that facilitates the integration of the enzyme into the cellulosome, and a C-terminal module, CtCE2, which displays dual activities: it catalyzes the deacetylation of plant polysaccharides and also potentiates the activity of its appended cellulase catalytic module through its non-catalytic cellulose binding function.</text>
</comment>
<comment type="similarity">
    <text evidence="10">In the N-terminal section; belongs to the glycosyl hydrolase 5 (cellulase A) family.</text>
</comment>
<comment type="similarity">
    <text evidence="11">In the C-terminal section; belongs to the carbohydrate esterase 2 (CE2) family.</text>
</comment>
<keyword id="KW-0002">3D-structure</keyword>
<keyword id="KW-0106">Calcium</keyword>
<keyword id="KW-0119">Carbohydrate metabolism</keyword>
<keyword id="KW-0136">Cellulose degradation</keyword>
<keyword id="KW-0903">Direct protein sequencing</keyword>
<keyword id="KW-0326">Glycosidase</keyword>
<keyword id="KW-0378">Hydrolase</keyword>
<keyword id="KW-0479">Metal-binding</keyword>
<keyword id="KW-0511">Multifunctional enzyme</keyword>
<keyword id="KW-0624">Polysaccharide degradation</keyword>
<keyword id="KW-1185">Reference proteome</keyword>
<keyword id="KW-0964">Secreted</keyword>
<keyword id="KW-0732">Signal</keyword>
<reference key="1">
    <citation type="journal article" date="1988" name="Gene">
        <title>Conserved reiterated domains in Clostridium thermocellum endoglucanases are not essential for catalytic activity.</title>
        <authorList>
            <person name="Hall J."/>
            <person name="Hazlewood G.P."/>
            <person name="Barker P.J."/>
            <person name="Gilbert H.J."/>
        </authorList>
    </citation>
    <scope>NUCLEOTIDE SEQUENCE [GENOMIC DNA]</scope>
    <scope>PROTEIN SEQUENCE OF 35-58</scope>
    <scope>FUNCTION</scope>
    <scope>CATALYTIC ACTIVITY</scope>
    <scope>PATHWAY</scope>
    <source>
        <strain>ATCC 27405 / DSM 1237 / JCM 9322 / NBRC 103400 / NCIMB 10682 / NRRL B-4536 / VPI 7372</strain>
    </source>
</reference>
<reference key="2">
    <citation type="submission" date="2007-02" db="EMBL/GenBank/DDBJ databases">
        <title>Complete sequence of Clostridium thermocellum ATCC 27405.</title>
        <authorList>
            <consortium name="US DOE Joint Genome Institute"/>
            <person name="Copeland A."/>
            <person name="Lucas S."/>
            <person name="Lapidus A."/>
            <person name="Barry K."/>
            <person name="Detter J.C."/>
            <person name="Glavina del Rio T."/>
            <person name="Hammon N."/>
            <person name="Israni S."/>
            <person name="Dalin E."/>
            <person name="Tice H."/>
            <person name="Pitluck S."/>
            <person name="Chertkov O."/>
            <person name="Brettin T."/>
            <person name="Bruce D."/>
            <person name="Han C."/>
            <person name="Tapia R."/>
            <person name="Gilna P."/>
            <person name="Schmutz J."/>
            <person name="Larimer F."/>
            <person name="Land M."/>
            <person name="Hauser L."/>
            <person name="Kyrpides N."/>
            <person name="Mikhailova N."/>
            <person name="Wu J.H.D."/>
            <person name="Newcomb M."/>
            <person name="Richardson P."/>
        </authorList>
    </citation>
    <scope>NUCLEOTIDE SEQUENCE [LARGE SCALE GENOMIC DNA]</scope>
    <source>
        <strain>ATCC 27405 / DSM 1237 / JCM 9322 / NBRC 103400 / NCIMB 10682 / NRRL B-4536 / VPI 7372</strain>
    </source>
</reference>
<reference key="3">
    <citation type="journal article" date="1991" name="Biochem. J.">
        <title>The non-catalytic C-terminal region of endoglucanase E from Clostridium thermocellum contains a cellulose-binding domain.</title>
        <authorList>
            <person name="Durrant A.J."/>
            <person name="Hall J."/>
            <person name="Hazlewood G.P."/>
            <person name="Gilbert H.J."/>
        </authorList>
    </citation>
    <scope>FUNCTION</scope>
    <scope>CATALYTIC ACTIVITY</scope>
    <scope>CELLULOSE-BINDING</scope>
    <scope>DOMAIN</scope>
</reference>
<reference key="4">
    <citation type="journal article" date="2009" name="PLoS Biol.">
        <title>The active site of a carbohydrate esterase displays divergent catalytic and noncatalytic binding functions.</title>
        <authorList>
            <person name="Montanier C."/>
            <person name="Money V.A."/>
            <person name="Pires V.M."/>
            <person name="Flint J.E."/>
            <person name="Pinheiro B.A."/>
            <person name="Goyal A."/>
            <person name="Prates J.A."/>
            <person name="Izumi A."/>
            <person name="Stalbrand H."/>
            <person name="Morland C."/>
            <person name="Cartmell A."/>
            <person name="Kolenova K."/>
            <person name="Topakas E."/>
            <person name="Dodson E.J."/>
            <person name="Bolam D.N."/>
            <person name="Davies G.J."/>
            <person name="Fontes C.M."/>
            <person name="Gilbert H.J."/>
        </authorList>
    </citation>
    <scope>X-RAY CRYSTALLOGRAPHY (1.80 ANGSTROMS) OF 485-814 OF WILD-TYPE AND MUTANT ALA-612 IN COMPLEX WITH CELLOHEXAOSE</scope>
    <scope>FUNCTION</scope>
    <scope>CATALYTIC ACTIVITY</scope>
    <scope>BIOPHYSICOCHEMICAL PROPERTIES</scope>
    <scope>DOMAIN</scope>
    <scope>ACTIVITY REGULATION</scope>
    <scope>MUTAGENESIS OF SER-612; ASP-789 AND HIS-791</scope>
    <scope>ACTIVE SITE</scope>
    <scope>PATHWAY</scope>
    <source>
        <strain>ATCC 27405 / DSM 1237 / JCM 9322 / NBRC 103400 / NCIMB 10682 / NRRL B-4536 / VPI 7372</strain>
    </source>
</reference>
<reference key="5">
    <citation type="submission" date="2013-01" db="PDB data bank">
        <title>Multifunctional cellulase, xylanase, mannanase.</title>
        <authorList>
            <person name="Bianchetti C.M."/>
            <person name="Takasuka T.E."/>
            <person name="Fox B.G."/>
        </authorList>
    </citation>
    <scope>X-RAY CRYSTALLOGRAPHY (2.42 ANGSTROMS) OF 51-386</scope>
</reference>
<proteinExistence type="evidence at protein level"/>
<accession>P10477</accession>
<accession>A3DDK3</accession>
<sequence>MKKIVSLVCVLVMLVSILGSFSVVAASPVKGFQVSGTKLLDASGNELVMRGMRDISAIDLVKEIKIGWNLGNTLDAPTETAWGNPRTTKAMIEKVREMGFNAVRVPVTWDTHIGPAPDYKIDEAWLNRVEEVVNYVLDCGMYAIINVHHDNTWIIPTYANEQRSKEKLVKVWEQIATRFKDYDDHLLFETMNEPREVGSPMEWMGGTYENRDVINRFNLAVVNTIRASGGNNDKRFILVPTNAATGLDVALNDLVIPNNDSRVIVSIHAYSPYFFAMDVNGTSYWGSDYDKASLTSELDAIYNRFVKNGRAVIIGEFGTIDKNNLSSRVAHAEHYAREAVSRGIAVFWWDNGYYNPGDAETYALLNRKTLSWYYPEIVQALMRGAGVEPLVSPTPTPTLMPTPSPTVTANILYGDVNGDGKINSTDCTMLKRYILRGIEEFPSPSGIIAADVNADLKINSTDLVLMKKYLLRSIDKFPAEDSQTPDEDNPGILYNGRFDFSDPNGPKCAWSGSNVELNFYGTEASVTIKSGGENWFQAIVDGNPLPPFSVNATTSTVKLVSGLAEGAHHLVLWKRTEASLGEVQFLGFDFGSGKLLAAPKPLERKIEFIGDSITCAYGNEGTSKEQSFTPKNENSYMSYAAITARNLNASANMIAWSGIGLTMNYGGAPGPLIMDRYPYTLPYSGVRWDFSKYVPQVVVINLGTNDFSTSFADKTKFVTAYKNLISEVRRNYPDAHIFCCVGPMLWGTGLDLCRSYVTEVVNDCNRSGDLKVYFVEFPQQDGSTGYGEDWHPSIATHQLMAERLTAEIKNKLGW</sequence>
<feature type="signal peptide" evidence="7">
    <location>
        <begin position="1"/>
        <end position="34"/>
    </location>
</feature>
<feature type="chain" id="PRO_0000007852" description="Cellulase/esterase CelE">
    <location>
        <begin position="35"/>
        <end position="814"/>
    </location>
</feature>
<feature type="domain" description="Dockerin" evidence="4">
    <location>
        <begin position="409"/>
        <end position="479"/>
    </location>
</feature>
<feature type="region of interest" description="Cellulase" evidence="10">
    <location>
        <begin position="35"/>
        <end position="354"/>
    </location>
</feature>
<feature type="region of interest" description="Esterase" evidence="10">
    <location>
        <begin position="490"/>
        <end position="814"/>
    </location>
</feature>
<feature type="active site" description="Proton donor; for cellulase activity" evidence="1">
    <location>
        <position position="193"/>
    </location>
</feature>
<feature type="active site" description="Nucleophile; for cellulase activity" evidence="2">
    <location>
        <position position="316"/>
    </location>
</feature>
<feature type="active site" description="Nucleophile; for esterase activity" evidence="11">
    <location>
        <position position="612"/>
    </location>
</feature>
<feature type="binding site" evidence="4">
    <location>
        <position position="415"/>
    </location>
    <ligand>
        <name>Ca(2+)</name>
        <dbReference type="ChEBI" id="CHEBI:29108"/>
        <label>1</label>
    </ligand>
</feature>
<feature type="binding site" evidence="4">
    <location>
        <position position="417"/>
    </location>
    <ligand>
        <name>Ca(2+)</name>
        <dbReference type="ChEBI" id="CHEBI:29108"/>
        <label>1</label>
    </ligand>
</feature>
<feature type="binding site" evidence="4">
    <location>
        <position position="419"/>
    </location>
    <ligand>
        <name>Ca(2+)</name>
        <dbReference type="ChEBI" id="CHEBI:29108"/>
        <label>1</label>
    </ligand>
</feature>
<feature type="binding site" evidence="4">
    <location>
        <position position="420"/>
    </location>
    <ligand>
        <name>Ca(2+)</name>
        <dbReference type="ChEBI" id="CHEBI:29108"/>
        <label>1</label>
    </ligand>
</feature>
<feature type="binding site" evidence="4">
    <location>
        <position position="421"/>
    </location>
    <ligand>
        <name>Ca(2+)</name>
        <dbReference type="ChEBI" id="CHEBI:29108"/>
        <label>1</label>
    </ligand>
</feature>
<feature type="binding site" evidence="4">
    <location>
        <position position="426"/>
    </location>
    <ligand>
        <name>Ca(2+)</name>
        <dbReference type="ChEBI" id="CHEBI:29108"/>
        <label>1</label>
    </ligand>
</feature>
<feature type="binding site" evidence="4">
    <location>
        <position position="451"/>
    </location>
    <ligand>
        <name>Ca(2+)</name>
        <dbReference type="ChEBI" id="CHEBI:29108"/>
        <label>2</label>
    </ligand>
</feature>
<feature type="binding site" evidence="4">
    <location>
        <position position="451"/>
    </location>
    <ligand>
        <name>Ca(2+)</name>
        <dbReference type="ChEBI" id="CHEBI:29108"/>
        <label>3</label>
    </ligand>
</feature>
<feature type="binding site" evidence="4">
    <location>
        <position position="452"/>
    </location>
    <ligand>
        <name>Ca(2+)</name>
        <dbReference type="ChEBI" id="CHEBI:29108"/>
        <label>2</label>
    </ligand>
</feature>
<feature type="binding site" evidence="4">
    <location>
        <position position="453"/>
    </location>
    <ligand>
        <name>Ca(2+)</name>
        <dbReference type="ChEBI" id="CHEBI:29108"/>
        <label>3</label>
    </ligand>
</feature>
<feature type="binding site" evidence="4">
    <location>
        <position position="455"/>
    </location>
    <ligand>
        <name>Ca(2+)</name>
        <dbReference type="ChEBI" id="CHEBI:29108"/>
        <label>3</label>
    </ligand>
</feature>
<feature type="binding site" evidence="4">
    <location>
        <position position="457"/>
    </location>
    <ligand>
        <name>Ca(2+)</name>
        <dbReference type="ChEBI" id="CHEBI:29108"/>
        <label>2</label>
    </ligand>
</feature>
<feature type="binding site" evidence="4">
    <location>
        <position position="457"/>
    </location>
    <ligand>
        <name>Ca(2+)</name>
        <dbReference type="ChEBI" id="CHEBI:29108"/>
        <label>3</label>
    </ligand>
</feature>
<feature type="binding site" evidence="4">
    <location>
        <position position="462"/>
    </location>
    <ligand>
        <name>Ca(2+)</name>
        <dbReference type="ChEBI" id="CHEBI:29108"/>
        <label>2</label>
    </ligand>
</feature>
<feature type="binding site" evidence="4">
    <location>
        <position position="462"/>
    </location>
    <ligand>
        <name>Ca(2+)</name>
        <dbReference type="ChEBI" id="CHEBI:29108"/>
        <label>3</label>
    </ligand>
</feature>
<feature type="site" description="Transition state stabilizer" evidence="3">
    <location>
        <position position="658"/>
    </location>
</feature>
<feature type="site" description="Transition state stabilizer" evidence="3">
    <location>
        <position position="705"/>
    </location>
</feature>
<feature type="site" description="Increases nucleophilicity of active site Ser" evidence="11">
    <location>
        <position position="791"/>
    </location>
</feature>
<feature type="mutagenesis site" description="Loss of esterase activity. 8-fold increase in the binding affinity to cellohexaose." evidence="5">
    <original>S</original>
    <variation>A</variation>
    <location>
        <position position="612"/>
    </location>
</feature>
<feature type="mutagenesis site" description="Retains significant esterase activity against 4-NPAc and the polymeric substrates." evidence="5">
    <original>D</original>
    <variation>A</variation>
    <variation>N</variation>
    <location>
        <position position="789"/>
    </location>
</feature>
<feature type="mutagenesis site" description="Loss of esterase activity. 20-fold decrease in the binding affinity to cellohexaose." evidence="5">
    <original>H</original>
    <variation>A</variation>
    <location>
        <position position="791"/>
    </location>
</feature>
<feature type="sequence conflict" description="In Ref. 1; AAA23224." evidence="10" ref="1">
    <original>V</original>
    <variation>L</variation>
    <location>
        <position position="147"/>
    </location>
</feature>
<feature type="helix" evidence="14">
    <location>
        <begin position="57"/>
        <end position="64"/>
    </location>
</feature>
<feature type="strand" evidence="14">
    <location>
        <begin position="66"/>
        <end position="70"/>
    </location>
</feature>
<feature type="strand" evidence="14">
    <location>
        <begin position="76"/>
        <end position="78"/>
    </location>
</feature>
<feature type="turn" evidence="14">
    <location>
        <begin position="79"/>
        <end position="82"/>
    </location>
</feature>
<feature type="helix" evidence="14">
    <location>
        <begin position="89"/>
        <end position="97"/>
    </location>
</feature>
<feature type="strand" evidence="14">
    <location>
        <begin position="102"/>
        <end position="105"/>
    </location>
</feature>
<feature type="helix" evidence="14">
    <location>
        <begin position="110"/>
        <end position="112"/>
    </location>
</feature>
<feature type="turn" evidence="14">
    <location>
        <begin position="116"/>
        <end position="118"/>
    </location>
</feature>
<feature type="helix" evidence="14">
    <location>
        <begin position="123"/>
        <end position="138"/>
    </location>
</feature>
<feature type="strand" evidence="14">
    <location>
        <begin position="142"/>
        <end position="145"/>
    </location>
</feature>
<feature type="turn" evidence="14">
    <location>
        <begin position="151"/>
        <end position="153"/>
    </location>
</feature>
<feature type="turn" evidence="14">
    <location>
        <begin position="158"/>
        <end position="160"/>
    </location>
</feature>
<feature type="helix" evidence="14">
    <location>
        <begin position="161"/>
        <end position="178"/>
    </location>
</feature>
<feature type="turn" evidence="14">
    <location>
        <begin position="179"/>
        <end position="181"/>
    </location>
</feature>
<feature type="strand" evidence="14">
    <location>
        <begin position="186"/>
        <end position="190"/>
    </location>
</feature>
<feature type="turn" evidence="14">
    <location>
        <begin position="200"/>
        <end position="205"/>
    </location>
</feature>
<feature type="helix" evidence="14">
    <location>
        <begin position="208"/>
        <end position="226"/>
    </location>
</feature>
<feature type="turn" evidence="14">
    <location>
        <begin position="230"/>
        <end position="234"/>
    </location>
</feature>
<feature type="strand" evidence="14">
    <location>
        <begin position="237"/>
        <end position="239"/>
    </location>
</feature>
<feature type="helix" evidence="14">
    <location>
        <begin position="242"/>
        <end position="244"/>
    </location>
</feature>
<feature type="helix" evidence="14">
    <location>
        <begin position="248"/>
        <end position="251"/>
    </location>
</feature>
<feature type="helix" evidence="14">
    <location>
        <begin position="257"/>
        <end position="259"/>
    </location>
</feature>
<feature type="strand" evidence="14">
    <location>
        <begin position="263"/>
        <end position="268"/>
    </location>
</feature>
<feature type="helix" evidence="14">
    <location>
        <begin position="273"/>
        <end position="276"/>
    </location>
</feature>
<feature type="helix" evidence="14">
    <location>
        <begin position="288"/>
        <end position="304"/>
    </location>
</feature>
<feature type="helix" evidence="14">
    <location>
        <begin position="306"/>
        <end position="308"/>
    </location>
</feature>
<feature type="strand" evidence="14">
    <location>
        <begin position="312"/>
        <end position="317"/>
    </location>
</feature>
<feature type="helix" evidence="14">
    <location>
        <begin position="325"/>
        <end position="340"/>
    </location>
</feature>
<feature type="turn" evidence="14">
    <location>
        <begin position="341"/>
        <end position="343"/>
    </location>
</feature>
<feature type="strand" evidence="14">
    <location>
        <begin position="345"/>
        <end position="350"/>
    </location>
</feature>
<feature type="turn" evidence="14">
    <location>
        <begin position="367"/>
        <end position="370"/>
    </location>
</feature>
<feature type="strand" evidence="14">
    <location>
        <begin position="371"/>
        <end position="373"/>
    </location>
</feature>
<feature type="helix" evidence="14">
    <location>
        <begin position="375"/>
        <end position="385"/>
    </location>
</feature>
<feature type="strand" evidence="13">
    <location>
        <begin position="493"/>
        <end position="496"/>
    </location>
</feature>
<feature type="strand" evidence="13">
    <location>
        <begin position="514"/>
        <end position="522"/>
    </location>
</feature>
<feature type="strand" evidence="13">
    <location>
        <begin position="524"/>
        <end position="540"/>
    </location>
</feature>
<feature type="strand" evidence="13">
    <location>
        <begin position="548"/>
        <end position="560"/>
    </location>
</feature>
<feature type="strand" evidence="13">
    <location>
        <begin position="565"/>
        <end position="574"/>
    </location>
</feature>
<feature type="helix" evidence="13">
    <location>
        <begin position="578"/>
        <end position="580"/>
    </location>
</feature>
<feature type="strand" evidence="13">
    <location>
        <begin position="583"/>
        <end position="589"/>
    </location>
</feature>
<feature type="strand" evidence="13">
    <location>
        <begin position="593"/>
        <end position="595"/>
    </location>
</feature>
<feature type="strand" evidence="13">
    <location>
        <begin position="603"/>
        <end position="611"/>
    </location>
</feature>
<feature type="helix" evidence="13">
    <location>
        <begin position="612"/>
        <end position="615"/>
    </location>
</feature>
<feature type="turn" evidence="13">
    <location>
        <begin position="616"/>
        <end position="620"/>
    </location>
</feature>
<feature type="helix" evidence="13">
    <location>
        <begin position="630"/>
        <end position="632"/>
    </location>
</feature>
<feature type="helix" evidence="13">
    <location>
        <begin position="635"/>
        <end position="637"/>
    </location>
</feature>
<feature type="helix" evidence="13">
    <location>
        <begin position="639"/>
        <end position="646"/>
    </location>
</feature>
<feature type="strand" evidence="13">
    <location>
        <begin position="649"/>
        <end position="655"/>
    </location>
</feature>
<feature type="helix" evidence="13">
    <location>
        <begin position="665"/>
        <end position="667"/>
    </location>
</feature>
<feature type="helix" evidence="13">
    <location>
        <begin position="673"/>
        <end position="676"/>
    </location>
</feature>
<feature type="strand" evidence="13">
    <location>
        <begin position="679"/>
        <end position="681"/>
    </location>
</feature>
<feature type="turn" evidence="13">
    <location>
        <begin position="682"/>
        <end position="685"/>
    </location>
</feature>
<feature type="helix" evidence="13">
    <location>
        <begin position="690"/>
        <end position="692"/>
    </location>
</feature>
<feature type="strand" evidence="13">
    <location>
        <begin position="696"/>
        <end position="701"/>
    </location>
</feature>
<feature type="helix" evidence="13">
    <location>
        <begin position="704"/>
        <end position="707"/>
    </location>
</feature>
<feature type="strand" evidence="13">
    <location>
        <begin position="708"/>
        <end position="710"/>
    </location>
</feature>
<feature type="helix" evidence="13">
    <location>
        <begin position="714"/>
        <end position="731"/>
    </location>
</feature>
<feature type="strand" evidence="13">
    <location>
        <begin position="736"/>
        <end position="741"/>
    </location>
</feature>
<feature type="helix" evidence="13">
    <location>
        <begin position="747"/>
        <end position="766"/>
    </location>
</feature>
<feature type="strand" evidence="13">
    <location>
        <begin position="771"/>
        <end position="776"/>
    </location>
</feature>
<feature type="helix" evidence="13">
    <location>
        <begin position="788"/>
        <end position="790"/>
    </location>
</feature>
<feature type="helix" evidence="13">
    <location>
        <begin position="794"/>
        <end position="812"/>
    </location>
</feature>
<dbReference type="EC" id="3.2.1.4" evidence="6 7"/>
<dbReference type="EC" id="3.1.1.-" evidence="5"/>
<dbReference type="EC" id="3.1.1.72" evidence="5"/>
<dbReference type="EMBL" id="M22759">
    <property type="protein sequence ID" value="AAA23224.1"/>
    <property type="molecule type" value="Genomic_DNA"/>
</dbReference>
<dbReference type="EMBL" id="CP000568">
    <property type="protein sequence ID" value="ABN52032.1"/>
    <property type="molecule type" value="Genomic_DNA"/>
</dbReference>
<dbReference type="PIR" id="JT0347">
    <property type="entry name" value="CZCLEM"/>
</dbReference>
<dbReference type="RefSeq" id="WP_011837903.1">
    <property type="nucleotide sequence ID" value="NC_009012.1"/>
</dbReference>
<dbReference type="PDB" id="2WAB">
    <property type="method" value="X-ray"/>
    <property type="resolution" value="1.90 A"/>
    <property type="chains" value="A=485-814"/>
</dbReference>
<dbReference type="PDB" id="2WAO">
    <property type="method" value="X-ray"/>
    <property type="resolution" value="1.80 A"/>
    <property type="chains" value="A=485-814"/>
</dbReference>
<dbReference type="PDB" id="4IM4">
    <property type="method" value="X-ray"/>
    <property type="resolution" value="2.42 A"/>
    <property type="chains" value="A/B/C/D/E/F=51-386"/>
</dbReference>
<dbReference type="PDBsum" id="2WAB"/>
<dbReference type="PDBsum" id="2WAO"/>
<dbReference type="PDBsum" id="4IM4"/>
<dbReference type="SMR" id="P10477"/>
<dbReference type="STRING" id="203119.Cthe_0797"/>
<dbReference type="CAZy" id="GH5">
    <property type="family name" value="Glycoside Hydrolase Family 5"/>
</dbReference>
<dbReference type="GeneID" id="35804088"/>
<dbReference type="KEGG" id="cth:Cthe_0797"/>
<dbReference type="eggNOG" id="COG2730">
    <property type="taxonomic scope" value="Bacteria"/>
</dbReference>
<dbReference type="eggNOG" id="COG2755">
    <property type="taxonomic scope" value="Bacteria"/>
</dbReference>
<dbReference type="HOGENOM" id="CLU_346724_0_0_9"/>
<dbReference type="OrthoDB" id="9800955at2"/>
<dbReference type="BioCyc" id="MetaCyc:MONOMER-16425"/>
<dbReference type="BRENDA" id="3.2.1.4">
    <property type="organism ID" value="1530"/>
</dbReference>
<dbReference type="UniPathway" id="UPA00114"/>
<dbReference type="UniPathway" id="UPA00696"/>
<dbReference type="EvolutionaryTrace" id="P10477"/>
<dbReference type="Proteomes" id="UP000002145">
    <property type="component" value="Chromosome"/>
</dbReference>
<dbReference type="GO" id="GO:0005576">
    <property type="term" value="C:extracellular region"/>
    <property type="evidence" value="ECO:0007669"/>
    <property type="project" value="UniProtKB-SubCell"/>
</dbReference>
<dbReference type="GO" id="GO:0046555">
    <property type="term" value="F:acetylxylan esterase activity"/>
    <property type="evidence" value="ECO:0000314"/>
    <property type="project" value="UniProtKB"/>
</dbReference>
<dbReference type="GO" id="GO:0008810">
    <property type="term" value="F:cellulase activity"/>
    <property type="evidence" value="ECO:0000314"/>
    <property type="project" value="UniProtKB"/>
</dbReference>
<dbReference type="GO" id="GO:0030248">
    <property type="term" value="F:cellulose binding"/>
    <property type="evidence" value="ECO:0000314"/>
    <property type="project" value="UniProtKB"/>
</dbReference>
<dbReference type="GO" id="GO:0046872">
    <property type="term" value="F:metal ion binding"/>
    <property type="evidence" value="ECO:0007669"/>
    <property type="project" value="UniProtKB-KW"/>
</dbReference>
<dbReference type="GO" id="GO:0030245">
    <property type="term" value="P:cellulose catabolic process"/>
    <property type="evidence" value="ECO:0000314"/>
    <property type="project" value="UniProtKB"/>
</dbReference>
<dbReference type="GO" id="GO:2000884">
    <property type="term" value="P:glucomannan catabolic process"/>
    <property type="evidence" value="ECO:0000314"/>
    <property type="project" value="UniProtKB"/>
</dbReference>
<dbReference type="GO" id="GO:0045493">
    <property type="term" value="P:xylan catabolic process"/>
    <property type="evidence" value="ECO:0000314"/>
    <property type="project" value="UniProtKB"/>
</dbReference>
<dbReference type="CDD" id="cd14256">
    <property type="entry name" value="Dockerin_I"/>
    <property type="match status" value="1"/>
</dbReference>
<dbReference type="CDD" id="cd01831">
    <property type="entry name" value="Endoglucanase_E_like"/>
    <property type="match status" value="1"/>
</dbReference>
<dbReference type="FunFam" id="3.40.50.1110:FF:000057">
    <property type="entry name" value="Acetylxylan esterase / glucomannan deacetylase"/>
    <property type="match status" value="1"/>
</dbReference>
<dbReference type="FunFam" id="2.60.120.260:FF:000421">
    <property type="entry name" value="Cellulase/esterase CelE"/>
    <property type="match status" value="1"/>
</dbReference>
<dbReference type="FunFam" id="1.10.1330.10:FF:000001">
    <property type="entry name" value="Endoglucanase D"/>
    <property type="match status" value="1"/>
</dbReference>
<dbReference type="Gene3D" id="1.10.1330.10">
    <property type="entry name" value="Dockerin domain"/>
    <property type="match status" value="1"/>
</dbReference>
<dbReference type="Gene3D" id="2.60.120.260">
    <property type="entry name" value="Galactose-binding domain-like"/>
    <property type="match status" value="1"/>
</dbReference>
<dbReference type="Gene3D" id="3.20.20.80">
    <property type="entry name" value="Glycosidases"/>
    <property type="match status" value="1"/>
</dbReference>
<dbReference type="Gene3D" id="3.40.50.1110">
    <property type="entry name" value="SGNH hydrolase"/>
    <property type="match status" value="1"/>
</dbReference>
<dbReference type="InterPro" id="IPR040794">
    <property type="entry name" value="CE2_N"/>
</dbReference>
<dbReference type="InterPro" id="IPR037461">
    <property type="entry name" value="CtCE2-like_dom"/>
</dbReference>
<dbReference type="InterPro" id="IPR002105">
    <property type="entry name" value="Dockerin_1_rpt"/>
</dbReference>
<dbReference type="InterPro" id="IPR016134">
    <property type="entry name" value="Dockerin_dom"/>
</dbReference>
<dbReference type="InterPro" id="IPR036439">
    <property type="entry name" value="Dockerin_dom_sf"/>
</dbReference>
<dbReference type="InterPro" id="IPR001087">
    <property type="entry name" value="GDSL"/>
</dbReference>
<dbReference type="InterPro" id="IPR001547">
    <property type="entry name" value="Glyco_hydro_5"/>
</dbReference>
<dbReference type="InterPro" id="IPR018087">
    <property type="entry name" value="Glyco_hydro_5_CS"/>
</dbReference>
<dbReference type="InterPro" id="IPR017853">
    <property type="entry name" value="Glycoside_hydrolase_SF"/>
</dbReference>
<dbReference type="InterPro" id="IPR052762">
    <property type="entry name" value="PCW_deacetylase/CE"/>
</dbReference>
<dbReference type="InterPro" id="IPR036514">
    <property type="entry name" value="SGNH_hydro_sf"/>
</dbReference>
<dbReference type="PANTHER" id="PTHR37834:SF2">
    <property type="entry name" value="ESTERASE, SGNH HYDROLASE-TYPE"/>
    <property type="match status" value="1"/>
</dbReference>
<dbReference type="PANTHER" id="PTHR37834">
    <property type="entry name" value="GDSL-LIKE LIPASE/ACYLHYDROLASE DOMAIN PROTEIN (AFU_ORTHOLOGUE AFUA_2G00620)"/>
    <property type="match status" value="1"/>
</dbReference>
<dbReference type="Pfam" id="PF17996">
    <property type="entry name" value="CE2_N"/>
    <property type="match status" value="1"/>
</dbReference>
<dbReference type="Pfam" id="PF00150">
    <property type="entry name" value="Cellulase"/>
    <property type="match status" value="1"/>
</dbReference>
<dbReference type="Pfam" id="PF00404">
    <property type="entry name" value="Dockerin_1"/>
    <property type="match status" value="1"/>
</dbReference>
<dbReference type="Pfam" id="PF00657">
    <property type="entry name" value="Lipase_GDSL"/>
    <property type="match status" value="1"/>
</dbReference>
<dbReference type="SUPFAM" id="SSF51445">
    <property type="entry name" value="(Trans)glycosidases"/>
    <property type="match status" value="1"/>
</dbReference>
<dbReference type="SUPFAM" id="SSF52266">
    <property type="entry name" value="SGNH hydrolase"/>
    <property type="match status" value="1"/>
</dbReference>
<dbReference type="SUPFAM" id="SSF63446">
    <property type="entry name" value="Type I dockerin domain"/>
    <property type="match status" value="1"/>
</dbReference>
<dbReference type="PROSITE" id="PS00448">
    <property type="entry name" value="CLOS_CELLULOSOME_RPT"/>
    <property type="match status" value="2"/>
</dbReference>
<dbReference type="PROSITE" id="PS51766">
    <property type="entry name" value="DOCKERIN"/>
    <property type="match status" value="1"/>
</dbReference>
<dbReference type="PROSITE" id="PS00659">
    <property type="entry name" value="GLYCOSYL_HYDROL_F5"/>
    <property type="match status" value="1"/>
</dbReference>
<protein>
    <recommendedName>
        <fullName evidence="10">Cellulase/esterase CelE</fullName>
    </recommendedName>
    <alternativeName>
        <fullName evidence="8">CtCel5C-CE2</fullName>
    </alternativeName>
    <domain>
        <recommendedName>
            <fullName evidence="9">Cellulase E</fullName>
            <ecNumber evidence="6 7">3.2.1.4</ecNumber>
        </recommendedName>
        <alternativeName>
            <fullName evidence="8">CtCel5C</fullName>
        </alternativeName>
        <alternativeName>
            <fullName evidence="9">Endo-1,4-beta-glucanase E</fullName>
            <shortName evidence="9">EGE</shortName>
            <shortName evidence="9">Endoglucanase E</shortName>
        </alternativeName>
    </domain>
    <domain>
        <recommendedName>
            <fullName evidence="11">Acetylxylan esterase / glucomannan deacetylase</fullName>
            <ecNumber evidence="5">3.1.1.-</ecNumber>
            <ecNumber evidence="5">3.1.1.72</ecNumber>
        </recommendedName>
        <alternativeName>
            <fullName evidence="8">CtCE2</fullName>
        </alternativeName>
    </domain>
</protein>
<evidence type="ECO:0000250" key="1"/>
<evidence type="ECO:0000250" key="2">
    <source>
        <dbReference type="UniProtKB" id="A7LXT7"/>
    </source>
</evidence>
<evidence type="ECO:0000250" key="3">
    <source>
        <dbReference type="UniProtKB" id="B3PIB0"/>
    </source>
</evidence>
<evidence type="ECO:0000255" key="4">
    <source>
        <dbReference type="PROSITE-ProRule" id="PRU01102"/>
    </source>
</evidence>
<evidence type="ECO:0000269" key="5">
    <source>
    </source>
</evidence>
<evidence type="ECO:0000269" key="6">
    <source>
    </source>
</evidence>
<evidence type="ECO:0000269" key="7">
    <source>
    </source>
</evidence>
<evidence type="ECO:0000303" key="8">
    <source>
    </source>
</evidence>
<evidence type="ECO:0000303" key="9">
    <source>
    </source>
</evidence>
<evidence type="ECO:0000305" key="10"/>
<evidence type="ECO:0000305" key="11">
    <source>
    </source>
</evidence>
<evidence type="ECO:0000312" key="12">
    <source>
        <dbReference type="EMBL" id="ABN52032.1"/>
    </source>
</evidence>
<evidence type="ECO:0007829" key="13">
    <source>
        <dbReference type="PDB" id="2WAO"/>
    </source>
</evidence>
<evidence type="ECO:0007829" key="14">
    <source>
        <dbReference type="PDB" id="4IM4"/>
    </source>
</evidence>